<dbReference type="EC" id="3.4.23.-"/>
<dbReference type="EMBL" id="AB488786">
    <property type="protein sequence ID" value="BAH24103.1"/>
    <property type="molecule type" value="mRNA"/>
</dbReference>
<dbReference type="EMBL" id="AC105318">
    <property type="protein sequence ID" value="AAV59304.1"/>
    <property type="status" value="ALT_SEQ"/>
    <property type="molecule type" value="Genomic_DNA"/>
</dbReference>
<dbReference type="EMBL" id="AC119292">
    <property type="protein sequence ID" value="AAT58885.1"/>
    <property type="status" value="ALT_SEQ"/>
    <property type="molecule type" value="Genomic_DNA"/>
</dbReference>
<dbReference type="EMBL" id="AP008211">
    <property type="protein sequence ID" value="BAF17562.1"/>
    <property type="status" value="ALT_SEQ"/>
    <property type="molecule type" value="Genomic_DNA"/>
</dbReference>
<dbReference type="EMBL" id="AP014961">
    <property type="status" value="NOT_ANNOTATED_CDS"/>
    <property type="molecule type" value="Genomic_DNA"/>
</dbReference>
<dbReference type="EMBL" id="CM000142">
    <property type="protein sequence ID" value="EEE63844.1"/>
    <property type="molecule type" value="Genomic_DNA"/>
</dbReference>
<dbReference type="RefSeq" id="XP_015640016.1">
    <property type="nucleotide sequence ID" value="XM_015784530.1"/>
</dbReference>
<dbReference type="FunCoup" id="B9FJ61">
    <property type="interactions" value="2730"/>
</dbReference>
<dbReference type="STRING" id="39947.B9FJ61"/>
<dbReference type="MEROPS" id="A22.A15"/>
<dbReference type="PaxDb" id="39947-B9FJ61"/>
<dbReference type="KEGG" id="dosa:Os05g0436400"/>
<dbReference type="InParanoid" id="B9FJ61"/>
<dbReference type="OrthoDB" id="29661at2759"/>
<dbReference type="Proteomes" id="UP000000763">
    <property type="component" value="Chromosome 5"/>
</dbReference>
<dbReference type="Proteomes" id="UP000007752">
    <property type="component" value="Chromosome 5"/>
</dbReference>
<dbReference type="Proteomes" id="UP000059680">
    <property type="component" value="Chromosome 5"/>
</dbReference>
<dbReference type="GO" id="GO:0098554">
    <property type="term" value="C:cytoplasmic side of endoplasmic reticulum membrane"/>
    <property type="evidence" value="ECO:0000318"/>
    <property type="project" value="GO_Central"/>
</dbReference>
<dbReference type="GO" id="GO:0005783">
    <property type="term" value="C:endoplasmic reticulum"/>
    <property type="evidence" value="ECO:0000314"/>
    <property type="project" value="UniProtKB"/>
</dbReference>
<dbReference type="GO" id="GO:0098553">
    <property type="term" value="C:lumenal side of endoplasmic reticulum membrane"/>
    <property type="evidence" value="ECO:0000318"/>
    <property type="project" value="GO_Central"/>
</dbReference>
<dbReference type="GO" id="GO:0042500">
    <property type="term" value="F:aspartic endopeptidase activity, intramembrane cleaving"/>
    <property type="evidence" value="ECO:0000318"/>
    <property type="project" value="GO_Central"/>
</dbReference>
<dbReference type="GO" id="GO:0033619">
    <property type="term" value="P:membrane protein proteolysis"/>
    <property type="evidence" value="ECO:0000318"/>
    <property type="project" value="GO_Central"/>
</dbReference>
<dbReference type="GO" id="GO:0006465">
    <property type="term" value="P:signal peptide processing"/>
    <property type="evidence" value="ECO:0000318"/>
    <property type="project" value="GO_Central"/>
</dbReference>
<dbReference type="InterPro" id="IPR007369">
    <property type="entry name" value="Peptidase_A22B_SPP"/>
</dbReference>
<dbReference type="InterPro" id="IPR006639">
    <property type="entry name" value="Preselin/SPP"/>
</dbReference>
<dbReference type="PANTHER" id="PTHR12174:SF23">
    <property type="entry name" value="MINOR HISTOCOMPATIBILITY ANTIGEN H13"/>
    <property type="match status" value="1"/>
</dbReference>
<dbReference type="PANTHER" id="PTHR12174">
    <property type="entry name" value="SIGNAL PEPTIDE PEPTIDASE"/>
    <property type="match status" value="1"/>
</dbReference>
<dbReference type="Pfam" id="PF04258">
    <property type="entry name" value="Peptidase_A22B"/>
    <property type="match status" value="1"/>
</dbReference>
<dbReference type="SMART" id="SM00730">
    <property type="entry name" value="PSN"/>
    <property type="match status" value="1"/>
</dbReference>
<sequence length="343" mass="37973">MKTHERAANLALAGLSLAPLVVKVNPNANVILTACLAVYVGCYRSVKPTPPAETMSKEHAMRFPLVGSAMLLSLFLLFKFLSKDLVNTVLTAYFFILGIAALCATLLPSIKRFLPKEWNDNAIVWRAPLFHSLSVEFTRSQVVASIPGFFFCIWYAAKKHWLANNVLGISFCIQGIEMLSLGSFKTGAILLSGLFFYDIFWVFFTPVMVSVAKSFDAPIKLLFPTGDAARPFSMLGLGDIVIPGIFVALALRFDVSRGIKNRYFNSAFLGYTVGLTVTIIVMNWFQAAQPALLYIVPGVIGFVAVHCLWNGEVKPLLEYNESKAEEEEACEEDTDSKQNKKKE</sequence>
<keyword id="KW-0256">Endoplasmic reticulum</keyword>
<keyword id="KW-0378">Hydrolase</keyword>
<keyword id="KW-0472">Membrane</keyword>
<keyword id="KW-1185">Reference proteome</keyword>
<keyword id="KW-0812">Transmembrane</keyword>
<keyword id="KW-1133">Transmembrane helix</keyword>
<proteinExistence type="evidence at transcript level"/>
<reference key="1">
    <citation type="journal article" date="2009" name="Plant Cell Rep.">
        <title>Signal peptide peptidases are expressed in the shoot apex of rice, localized to the endoplasmic reticulum.</title>
        <authorList>
            <person name="Tamura T."/>
            <person name="Kuroda M."/>
            <person name="Oikawa T."/>
            <person name="Kyozuka J."/>
            <person name="Terauchi K."/>
            <person name="Ishimaru Y."/>
            <person name="Abe K."/>
            <person name="Asakura T."/>
        </authorList>
    </citation>
    <scope>NUCLEOTIDE SEQUENCE [MRNA]</scope>
    <scope>GENE FAMILY</scope>
    <scope>NOMENCLATURE</scope>
    <scope>SUBCELLULAR LOCATION</scope>
    <scope>TISSUE SPECIFICITY</scope>
    <scope>DEVELOPMENTAL STAGE</scope>
    <source>
        <strain>cv. Nipponbare</strain>
    </source>
</reference>
<reference key="2">
    <citation type="journal article" date="2005" name="Mol. Genet. Genomics">
        <title>A fine physical map of the rice chromosome 5.</title>
        <authorList>
            <person name="Cheng C.-H."/>
            <person name="Chung M.C."/>
            <person name="Liu S.-M."/>
            <person name="Chen S.-K."/>
            <person name="Kao F.Y."/>
            <person name="Lin S.-J."/>
            <person name="Hsiao S.-H."/>
            <person name="Tseng I.C."/>
            <person name="Hsing Y.-I.C."/>
            <person name="Wu H.-P."/>
            <person name="Chen C.-S."/>
            <person name="Shaw J.-F."/>
            <person name="Wu J."/>
            <person name="Matsumoto T."/>
            <person name="Sasaki T."/>
            <person name="Chen H.-C."/>
            <person name="Chow T.-Y."/>
        </authorList>
    </citation>
    <scope>NUCLEOTIDE SEQUENCE [LARGE SCALE GENOMIC DNA]</scope>
    <source>
        <strain>cv. Nipponbare</strain>
    </source>
</reference>
<reference key="3">
    <citation type="journal article" date="2005" name="Nature">
        <title>The map-based sequence of the rice genome.</title>
        <authorList>
            <consortium name="International rice genome sequencing project (IRGSP)"/>
        </authorList>
    </citation>
    <scope>NUCLEOTIDE SEQUENCE [LARGE SCALE GENOMIC DNA]</scope>
    <source>
        <strain>cv. Nipponbare</strain>
    </source>
</reference>
<reference key="4">
    <citation type="journal article" date="2008" name="Nucleic Acids Res.">
        <title>The rice annotation project database (RAP-DB): 2008 update.</title>
        <authorList>
            <consortium name="The rice annotation project (RAP)"/>
        </authorList>
    </citation>
    <scope>GENOME REANNOTATION</scope>
    <source>
        <strain>cv. Nipponbare</strain>
    </source>
</reference>
<reference key="5">
    <citation type="journal article" date="2013" name="Rice">
        <title>Improvement of the Oryza sativa Nipponbare reference genome using next generation sequence and optical map data.</title>
        <authorList>
            <person name="Kawahara Y."/>
            <person name="de la Bastide M."/>
            <person name="Hamilton J.P."/>
            <person name="Kanamori H."/>
            <person name="McCombie W.R."/>
            <person name="Ouyang S."/>
            <person name="Schwartz D.C."/>
            <person name="Tanaka T."/>
            <person name="Wu J."/>
            <person name="Zhou S."/>
            <person name="Childs K.L."/>
            <person name="Davidson R.M."/>
            <person name="Lin H."/>
            <person name="Quesada-Ocampo L."/>
            <person name="Vaillancourt B."/>
            <person name="Sakai H."/>
            <person name="Lee S.S."/>
            <person name="Kim J."/>
            <person name="Numa H."/>
            <person name="Itoh T."/>
            <person name="Buell C.R."/>
            <person name="Matsumoto T."/>
        </authorList>
    </citation>
    <scope>GENOME REANNOTATION</scope>
    <source>
        <strain>cv. Nipponbare</strain>
    </source>
</reference>
<reference key="6">
    <citation type="journal article" date="2005" name="PLoS Biol.">
        <title>The genomes of Oryza sativa: a history of duplications.</title>
        <authorList>
            <person name="Yu J."/>
            <person name="Wang J."/>
            <person name="Lin W."/>
            <person name="Li S."/>
            <person name="Li H."/>
            <person name="Zhou J."/>
            <person name="Ni P."/>
            <person name="Dong W."/>
            <person name="Hu S."/>
            <person name="Zeng C."/>
            <person name="Zhang J."/>
            <person name="Zhang Y."/>
            <person name="Li R."/>
            <person name="Xu Z."/>
            <person name="Li S."/>
            <person name="Li X."/>
            <person name="Zheng H."/>
            <person name="Cong L."/>
            <person name="Lin L."/>
            <person name="Yin J."/>
            <person name="Geng J."/>
            <person name="Li G."/>
            <person name="Shi J."/>
            <person name="Liu J."/>
            <person name="Lv H."/>
            <person name="Li J."/>
            <person name="Wang J."/>
            <person name="Deng Y."/>
            <person name="Ran L."/>
            <person name="Shi X."/>
            <person name="Wang X."/>
            <person name="Wu Q."/>
            <person name="Li C."/>
            <person name="Ren X."/>
            <person name="Wang J."/>
            <person name="Wang X."/>
            <person name="Li D."/>
            <person name="Liu D."/>
            <person name="Zhang X."/>
            <person name="Ji Z."/>
            <person name="Zhao W."/>
            <person name="Sun Y."/>
            <person name="Zhang Z."/>
            <person name="Bao J."/>
            <person name="Han Y."/>
            <person name="Dong L."/>
            <person name="Ji J."/>
            <person name="Chen P."/>
            <person name="Wu S."/>
            <person name="Liu J."/>
            <person name="Xiao Y."/>
            <person name="Bu D."/>
            <person name="Tan J."/>
            <person name="Yang L."/>
            <person name="Ye C."/>
            <person name="Zhang J."/>
            <person name="Xu J."/>
            <person name="Zhou Y."/>
            <person name="Yu Y."/>
            <person name="Zhang B."/>
            <person name="Zhuang S."/>
            <person name="Wei H."/>
            <person name="Liu B."/>
            <person name="Lei M."/>
            <person name="Yu H."/>
            <person name="Li Y."/>
            <person name="Xu H."/>
            <person name="Wei S."/>
            <person name="He X."/>
            <person name="Fang L."/>
            <person name="Zhang Z."/>
            <person name="Zhang Y."/>
            <person name="Huang X."/>
            <person name="Su Z."/>
            <person name="Tong W."/>
            <person name="Li J."/>
            <person name="Tong Z."/>
            <person name="Li S."/>
            <person name="Ye J."/>
            <person name="Wang L."/>
            <person name="Fang L."/>
            <person name="Lei T."/>
            <person name="Chen C.-S."/>
            <person name="Chen H.-C."/>
            <person name="Xu Z."/>
            <person name="Li H."/>
            <person name="Huang H."/>
            <person name="Zhang F."/>
            <person name="Xu H."/>
            <person name="Li N."/>
            <person name="Zhao C."/>
            <person name="Li S."/>
            <person name="Dong L."/>
            <person name="Huang Y."/>
            <person name="Li L."/>
            <person name="Xi Y."/>
            <person name="Qi Q."/>
            <person name="Li W."/>
            <person name="Zhang B."/>
            <person name="Hu W."/>
            <person name="Zhang Y."/>
            <person name="Tian X."/>
            <person name="Jiao Y."/>
            <person name="Liang X."/>
            <person name="Jin J."/>
            <person name="Gao L."/>
            <person name="Zheng W."/>
            <person name="Hao B."/>
            <person name="Liu S.-M."/>
            <person name="Wang W."/>
            <person name="Yuan L."/>
            <person name="Cao M."/>
            <person name="McDermott J."/>
            <person name="Samudrala R."/>
            <person name="Wang J."/>
            <person name="Wong G.K.-S."/>
            <person name="Yang H."/>
        </authorList>
    </citation>
    <scope>NUCLEOTIDE SEQUENCE [LARGE SCALE GENOMIC DNA]</scope>
    <source>
        <strain>cv. Nipponbare</strain>
    </source>
</reference>
<comment type="function">
    <text evidence="1">Intramembrane-cleaving aspartic protease (I-CLiP) that cleaves type II membrane signal peptides in the hydrophobic plane of the membrane. Catalyzes intramembrane proteolysis of some signal peptides after they have been cleaved from a preprotein, resulting in the release of the fragment from the ER membrane into the cytoplasm.</text>
</comment>
<comment type="subcellular location">
    <subcellularLocation>
        <location evidence="4">Endoplasmic reticulum membrane</location>
        <topology evidence="4">Multi-pass membrane protein</topology>
    </subcellularLocation>
</comment>
<comment type="tissue specificity">
    <text evidence="4">Ubiquitous.</text>
</comment>
<comment type="developmental stage">
    <text evidence="4">Strongly expressed in vegetative shoot apex, young panicle, developing panicle, and the early developing florets.</text>
</comment>
<comment type="domain">
    <text evidence="1">The first transmembrane domain may act as a type I signal anchor. The PAL motif is required for normal active site conformation.</text>
</comment>
<comment type="similarity">
    <text evidence="5">Belongs to the peptidase A22B family.</text>
</comment>
<comment type="sequence caution" evidence="5">
    <conflict type="erroneous gene model prediction">
        <sequence resource="EMBL-CDS" id="AAT58885"/>
    </conflict>
</comment>
<comment type="sequence caution" evidence="5">
    <conflict type="erroneous gene model prediction">
        <sequence resource="EMBL-CDS" id="AAV59304"/>
    </conflict>
</comment>
<comment type="sequence caution" evidence="5">
    <conflict type="erroneous gene model prediction">
        <sequence resource="EMBL-CDS" id="BAF17562"/>
    </conflict>
</comment>
<protein>
    <recommendedName>
        <fullName>Signal peptide peptidase 2</fullName>
        <shortName>OsSPP2</shortName>
        <ecNumber>3.4.23.-</ecNumber>
    </recommendedName>
    <alternativeName>
        <fullName>Intramembrane protease 2</fullName>
        <shortName>IMP</shortName>
        <shortName>IMPAS</shortName>
    </alternativeName>
</protein>
<organism>
    <name type="scientific">Oryza sativa subsp. japonica</name>
    <name type="common">Rice</name>
    <dbReference type="NCBI Taxonomy" id="39947"/>
    <lineage>
        <taxon>Eukaryota</taxon>
        <taxon>Viridiplantae</taxon>
        <taxon>Streptophyta</taxon>
        <taxon>Embryophyta</taxon>
        <taxon>Tracheophyta</taxon>
        <taxon>Spermatophyta</taxon>
        <taxon>Magnoliopsida</taxon>
        <taxon>Liliopsida</taxon>
        <taxon>Poales</taxon>
        <taxon>Poaceae</taxon>
        <taxon>BOP clade</taxon>
        <taxon>Oryzoideae</taxon>
        <taxon>Oryzeae</taxon>
        <taxon>Oryzinae</taxon>
        <taxon>Oryza</taxon>
        <taxon>Oryza sativa</taxon>
    </lineage>
</organism>
<accession>B9FJ61</accession>
<accession>Q6I5K5</accession>
<feature type="chain" id="PRO_0000419099" description="Signal peptide peptidase 2">
    <location>
        <begin position="1"/>
        <end position="343"/>
    </location>
</feature>
<feature type="topological domain" description="Lumenal" evidence="2">
    <location>
        <begin position="1"/>
        <end position="19"/>
    </location>
</feature>
<feature type="transmembrane region" description="Helical" evidence="2">
    <location>
        <begin position="20"/>
        <end position="40"/>
    </location>
</feature>
<feature type="topological domain" description="Cytoplasmic" evidence="2">
    <location>
        <begin position="41"/>
        <end position="62"/>
    </location>
</feature>
<feature type="transmembrane region" description="Helical" evidence="2">
    <location>
        <begin position="63"/>
        <end position="83"/>
    </location>
</feature>
<feature type="topological domain" description="Lumenal" evidence="2">
    <location>
        <begin position="84"/>
        <end position="89"/>
    </location>
</feature>
<feature type="transmembrane region" description="Helical" evidence="2">
    <location>
        <begin position="90"/>
        <end position="110"/>
    </location>
</feature>
<feature type="topological domain" description="Cytoplasmic" evidence="2">
    <location>
        <begin position="111"/>
        <end position="141"/>
    </location>
</feature>
<feature type="transmembrane region" description="Helical" evidence="2">
    <location>
        <begin position="142"/>
        <end position="162"/>
    </location>
</feature>
<feature type="topological domain" description="Lumenal" evidence="2">
    <location>
        <begin position="163"/>
        <end position="165"/>
    </location>
</feature>
<feature type="transmembrane region" description="Helical" evidence="2">
    <location>
        <begin position="166"/>
        <end position="186"/>
    </location>
</feature>
<feature type="topological domain" description="Cytoplasmic" evidence="2">
    <location>
        <begin position="187"/>
        <end position="188"/>
    </location>
</feature>
<feature type="transmembrane region" description="Helical" evidence="2">
    <location>
        <begin position="189"/>
        <end position="209"/>
    </location>
</feature>
<feature type="topological domain" description="Lumenal" evidence="2">
    <location>
        <begin position="210"/>
        <end position="230"/>
    </location>
</feature>
<feature type="transmembrane region" description="Helical" evidence="2">
    <location>
        <begin position="231"/>
        <end position="251"/>
    </location>
</feature>
<feature type="topological domain" description="Cytoplasmic" evidence="2">
    <location>
        <begin position="252"/>
        <end position="266"/>
    </location>
</feature>
<feature type="transmembrane region" description="Helical" evidence="2">
    <location>
        <begin position="267"/>
        <end position="287"/>
    </location>
</feature>
<feature type="topological domain" description="Lumenal" evidence="2">
    <location>
        <begin position="288"/>
        <end position="290"/>
    </location>
</feature>
<feature type="transmembrane region" description="Helical" evidence="2">
    <location>
        <begin position="291"/>
        <end position="311"/>
    </location>
</feature>
<feature type="topological domain" description="Cytoplasmic" evidence="2">
    <location>
        <begin position="312"/>
        <end position="343"/>
    </location>
</feature>
<feature type="region of interest" description="Disordered" evidence="3">
    <location>
        <begin position="324"/>
        <end position="343"/>
    </location>
</feature>
<feature type="short sequence motif" description="PAL">
    <location>
        <begin position="290"/>
        <end position="292"/>
    </location>
</feature>
<feature type="short sequence motif" description="Endoplasmic reticulum targeting signal" evidence="2">
    <location>
        <begin position="340"/>
        <end position="343"/>
    </location>
</feature>
<feature type="compositionally biased region" description="Acidic residues" evidence="3">
    <location>
        <begin position="324"/>
        <end position="334"/>
    </location>
</feature>
<feature type="active site" evidence="1">
    <location>
        <position position="198"/>
    </location>
</feature>
<feature type="active site" evidence="1">
    <location>
        <position position="239"/>
    </location>
</feature>
<gene>
    <name type="primary">SPP2</name>
    <name type="ordered locus">Os05g0436400</name>
    <name type="ordered locus">LOC_Os05g36070</name>
    <name type="ORF">OJ1058_F05.2</name>
    <name type="ORF">OsJ_18668</name>
    <name type="ORF">OSJNBb0088F07.14</name>
</gene>
<evidence type="ECO:0000250" key="1"/>
<evidence type="ECO:0000255" key="2"/>
<evidence type="ECO:0000256" key="3">
    <source>
        <dbReference type="SAM" id="MobiDB-lite"/>
    </source>
</evidence>
<evidence type="ECO:0000269" key="4">
    <source>
    </source>
</evidence>
<evidence type="ECO:0000305" key="5"/>
<name>SIP2_ORYSJ</name>